<proteinExistence type="inferred from homology"/>
<comment type="function">
    <text evidence="1">Inhibits the expression or activity of extracellular murein hydrolases by interacting, possibly with LrgA, with the holin-like protein CidA. The LrgAB and CidA proteins may affect the proton motive force of the membrane. May be involved in programmed cell death (PCD), possibly triggering PCD in response to antibiotics and environmental stresses.</text>
</comment>
<comment type="subcellular location">
    <subcellularLocation>
        <location evidence="1">Cell membrane</location>
        <topology evidence="1">Multi-pass membrane protein</topology>
    </subcellularLocation>
</comment>
<comment type="similarity">
    <text evidence="1">Belongs to the CidB/LrgB family. LrgB subfamily.</text>
</comment>
<accession>Q630G4</accession>
<evidence type="ECO:0000255" key="1">
    <source>
        <dbReference type="HAMAP-Rule" id="MF_01142"/>
    </source>
</evidence>
<reference key="1">
    <citation type="journal article" date="2006" name="J. Bacteriol.">
        <title>Pathogenomic sequence analysis of Bacillus cereus and Bacillus thuringiensis isolates closely related to Bacillus anthracis.</title>
        <authorList>
            <person name="Han C.S."/>
            <person name="Xie G."/>
            <person name="Challacombe J.F."/>
            <person name="Altherr M.R."/>
            <person name="Bhotika S.S."/>
            <person name="Bruce D."/>
            <person name="Campbell C.S."/>
            <person name="Campbell M.L."/>
            <person name="Chen J."/>
            <person name="Chertkov O."/>
            <person name="Cleland C."/>
            <person name="Dimitrijevic M."/>
            <person name="Doggett N.A."/>
            <person name="Fawcett J.J."/>
            <person name="Glavina T."/>
            <person name="Goodwin L.A."/>
            <person name="Hill K.K."/>
            <person name="Hitchcock P."/>
            <person name="Jackson P.J."/>
            <person name="Keim P."/>
            <person name="Kewalramani A.R."/>
            <person name="Longmire J."/>
            <person name="Lucas S."/>
            <person name="Malfatti S."/>
            <person name="McMurry K."/>
            <person name="Meincke L.J."/>
            <person name="Misra M."/>
            <person name="Moseman B.L."/>
            <person name="Mundt M."/>
            <person name="Munk A.C."/>
            <person name="Okinaka R.T."/>
            <person name="Parson-Quintana B."/>
            <person name="Reilly L.P."/>
            <person name="Richardson P."/>
            <person name="Robinson D.L."/>
            <person name="Rubin E."/>
            <person name="Saunders E."/>
            <person name="Tapia R."/>
            <person name="Tesmer J.G."/>
            <person name="Thayer N."/>
            <person name="Thompson L.S."/>
            <person name="Tice H."/>
            <person name="Ticknor L.O."/>
            <person name="Wills P.L."/>
            <person name="Brettin T.S."/>
            <person name="Gilna P."/>
        </authorList>
    </citation>
    <scope>NUCLEOTIDE SEQUENCE [LARGE SCALE GENOMIC DNA]</scope>
    <source>
        <strain>ZK / E33L</strain>
    </source>
</reference>
<protein>
    <recommendedName>
        <fullName evidence="1">Antiholin-like protein LrgB</fullName>
    </recommendedName>
</protein>
<sequence>MASTMTPYFGIVVSLIAYGIGTLLFKHSKGFFLFTPLFVAMVLGIVFLKVGNFTFEEYNTGGKMISFFLEPATIAFAIPLYKQVDKLKKYWWQILSAIVVGSICSVIVVFIVAKAIGLDTAVMNSMLPQAATTAIALPISESIGGIPAITSFAVIFNAVIVYALGALFLKTFRVKHPIAKGLALGTAGHALGVAVGIEMGEVEAAMASIAVTVVGVVTVVVIPMFMPFIG</sequence>
<organism>
    <name type="scientific">Bacillus cereus (strain ZK / E33L)</name>
    <dbReference type="NCBI Taxonomy" id="288681"/>
    <lineage>
        <taxon>Bacteria</taxon>
        <taxon>Bacillati</taxon>
        <taxon>Bacillota</taxon>
        <taxon>Bacilli</taxon>
        <taxon>Bacillales</taxon>
        <taxon>Bacillaceae</taxon>
        <taxon>Bacillus</taxon>
        <taxon>Bacillus cereus group</taxon>
    </lineage>
</organism>
<keyword id="KW-1003">Cell membrane</keyword>
<keyword id="KW-0204">Cytolysis</keyword>
<keyword id="KW-0472">Membrane</keyword>
<keyword id="KW-0812">Transmembrane</keyword>
<keyword id="KW-1133">Transmembrane helix</keyword>
<gene>
    <name evidence="1" type="primary">lrgB</name>
    <name type="ordered locus">BCE33L5135</name>
</gene>
<feature type="chain" id="PRO_1000065440" description="Antiholin-like protein LrgB">
    <location>
        <begin position="1"/>
        <end position="230"/>
    </location>
</feature>
<feature type="transmembrane region" description="Helical" evidence="1">
    <location>
        <begin position="5"/>
        <end position="25"/>
    </location>
</feature>
<feature type="transmembrane region" description="Helical" evidence="1">
    <location>
        <begin position="30"/>
        <end position="50"/>
    </location>
</feature>
<feature type="transmembrane region" description="Helical" evidence="1">
    <location>
        <begin position="61"/>
        <end position="81"/>
    </location>
</feature>
<feature type="transmembrane region" description="Helical" evidence="1">
    <location>
        <begin position="92"/>
        <end position="112"/>
    </location>
</feature>
<feature type="transmembrane region" description="Helical" evidence="1">
    <location>
        <begin position="149"/>
        <end position="169"/>
    </location>
</feature>
<feature type="transmembrane region" description="Helical" evidence="1">
    <location>
        <begin position="177"/>
        <end position="197"/>
    </location>
</feature>
<feature type="transmembrane region" description="Helical" evidence="1">
    <location>
        <begin position="209"/>
        <end position="229"/>
    </location>
</feature>
<name>LRGB_BACCZ</name>
<dbReference type="EMBL" id="CP000001">
    <property type="protein sequence ID" value="AAU20265.1"/>
    <property type="molecule type" value="Genomic_DNA"/>
</dbReference>
<dbReference type="RefSeq" id="WP_000168869.1">
    <property type="nucleotide sequence ID" value="NZ_CP009968.1"/>
</dbReference>
<dbReference type="GeneID" id="93005687"/>
<dbReference type="KEGG" id="bcz:BCE33L5135"/>
<dbReference type="PATRIC" id="fig|288681.22.peg.206"/>
<dbReference type="Proteomes" id="UP000002612">
    <property type="component" value="Chromosome"/>
</dbReference>
<dbReference type="GO" id="GO:0005886">
    <property type="term" value="C:plasma membrane"/>
    <property type="evidence" value="ECO:0007669"/>
    <property type="project" value="UniProtKB-SubCell"/>
</dbReference>
<dbReference type="GO" id="GO:0019835">
    <property type="term" value="P:cytolysis"/>
    <property type="evidence" value="ECO:0007669"/>
    <property type="project" value="UniProtKB-UniRule"/>
</dbReference>
<dbReference type="GO" id="GO:0031640">
    <property type="term" value="P:killing of cells of another organism"/>
    <property type="evidence" value="ECO:0007669"/>
    <property type="project" value="UniProtKB-KW"/>
</dbReference>
<dbReference type="GO" id="GO:0012501">
    <property type="term" value="P:programmed cell death"/>
    <property type="evidence" value="ECO:0007669"/>
    <property type="project" value="UniProtKB-UniRule"/>
</dbReference>
<dbReference type="HAMAP" id="MF_01142">
    <property type="entry name" value="LrgB"/>
    <property type="match status" value="1"/>
</dbReference>
<dbReference type="InterPro" id="IPR024891">
    <property type="entry name" value="Antiholin-like_LrgB"/>
</dbReference>
<dbReference type="InterPro" id="IPR007300">
    <property type="entry name" value="CidB/LrgB"/>
</dbReference>
<dbReference type="NCBIfam" id="NF003291">
    <property type="entry name" value="PRK04288.1"/>
    <property type="match status" value="1"/>
</dbReference>
<dbReference type="PANTHER" id="PTHR30249:SF0">
    <property type="entry name" value="PLASTIDAL GLYCOLATE_GLYCERATE TRANSLOCATOR 1, CHLOROPLASTIC"/>
    <property type="match status" value="1"/>
</dbReference>
<dbReference type="PANTHER" id="PTHR30249">
    <property type="entry name" value="PUTATIVE SEROTONIN TRANSPORTER"/>
    <property type="match status" value="1"/>
</dbReference>
<dbReference type="Pfam" id="PF04172">
    <property type="entry name" value="LrgB"/>
    <property type="match status" value="1"/>
</dbReference>